<accession>Q6MX07</accession>
<accession>L0TEE9</accession>
<protein>
    <recommendedName>
        <fullName>Uncharacterized PPE family protein PPE50</fullName>
    </recommendedName>
</protein>
<proteinExistence type="evidence at protein level"/>
<sequence length="132" mass="13667">MDYAFLPPEINSARMYSGPGPNSMLVAAASWDALAAELASAAENYGSVIARLTGMHWWGPASTSMLAMSAPYVEWLERTAAQTKQTATQARAAAAAFEQAHAMTVPPALVTGIRGAIVVETASASNTAGTPP</sequence>
<evidence type="ECO:0000305" key="1"/>
<comment type="miscellaneous">
    <text>Was identified as a high-confidence drug target.</text>
</comment>
<comment type="similarity">
    <text evidence="1">Belongs to the mycobacterial PPE family.</text>
</comment>
<organism>
    <name type="scientific">Mycobacterium tuberculosis (strain ATCC 25618 / H37Rv)</name>
    <dbReference type="NCBI Taxonomy" id="83332"/>
    <lineage>
        <taxon>Bacteria</taxon>
        <taxon>Bacillati</taxon>
        <taxon>Actinomycetota</taxon>
        <taxon>Actinomycetes</taxon>
        <taxon>Mycobacteriales</taxon>
        <taxon>Mycobacteriaceae</taxon>
        <taxon>Mycobacterium</taxon>
        <taxon>Mycobacterium tuberculosis complex</taxon>
    </lineage>
</organism>
<reference key="1">
    <citation type="journal article" date="1998" name="Nature">
        <title>Deciphering the biology of Mycobacterium tuberculosis from the complete genome sequence.</title>
        <authorList>
            <person name="Cole S.T."/>
            <person name="Brosch R."/>
            <person name="Parkhill J."/>
            <person name="Garnier T."/>
            <person name="Churcher C.M."/>
            <person name="Harris D.E."/>
            <person name="Gordon S.V."/>
            <person name="Eiglmeier K."/>
            <person name="Gas S."/>
            <person name="Barry C.E. III"/>
            <person name="Tekaia F."/>
            <person name="Badcock K."/>
            <person name="Basham D."/>
            <person name="Brown D."/>
            <person name="Chillingworth T."/>
            <person name="Connor R."/>
            <person name="Davies R.M."/>
            <person name="Devlin K."/>
            <person name="Feltwell T."/>
            <person name="Gentles S."/>
            <person name="Hamlin N."/>
            <person name="Holroyd S."/>
            <person name="Hornsby T."/>
            <person name="Jagels K."/>
            <person name="Krogh A."/>
            <person name="McLean J."/>
            <person name="Moule S."/>
            <person name="Murphy L.D."/>
            <person name="Oliver S."/>
            <person name="Osborne J."/>
            <person name="Quail M.A."/>
            <person name="Rajandream M.A."/>
            <person name="Rogers J."/>
            <person name="Rutter S."/>
            <person name="Seeger K."/>
            <person name="Skelton S."/>
            <person name="Squares S."/>
            <person name="Squares R."/>
            <person name="Sulston J.E."/>
            <person name="Taylor K."/>
            <person name="Whitehead S."/>
            <person name="Barrell B.G."/>
        </authorList>
    </citation>
    <scope>NUCLEOTIDE SEQUENCE [LARGE SCALE GENOMIC DNA]</scope>
    <source>
        <strain>ATCC 25618 / H37Rv</strain>
    </source>
</reference>
<reference key="2">
    <citation type="journal article" date="2008" name="BMC Syst. Biol.">
        <title>targetTB: a target identification pipeline for Mycobacterium tuberculosis through an interactome, reactome and genome-scale structural analysis.</title>
        <authorList>
            <person name="Raman K."/>
            <person name="Yeturu K."/>
            <person name="Chandra N."/>
        </authorList>
    </citation>
    <scope>IDENTIFICATION AS A DRUG TARGET [LARGE SCALE ANALYSIS]</scope>
</reference>
<reference key="3">
    <citation type="journal article" date="2011" name="Mol. Cell. Proteomics">
        <title>Proteogenomic analysis of Mycobacterium tuberculosis by high resolution mass spectrometry.</title>
        <authorList>
            <person name="Kelkar D.S."/>
            <person name="Kumar D."/>
            <person name="Kumar P."/>
            <person name="Balakrishnan L."/>
            <person name="Muthusamy B."/>
            <person name="Yadav A.K."/>
            <person name="Shrivastava P."/>
            <person name="Marimuthu A."/>
            <person name="Anand S."/>
            <person name="Sundaram H."/>
            <person name="Kingsbury R."/>
            <person name="Harsha H.C."/>
            <person name="Nair B."/>
            <person name="Prasad T.S."/>
            <person name="Chauhan D.S."/>
            <person name="Katoch K."/>
            <person name="Katoch V.M."/>
            <person name="Kumar P."/>
            <person name="Chaerkady R."/>
            <person name="Ramachandran S."/>
            <person name="Dash D."/>
            <person name="Pandey A."/>
        </authorList>
    </citation>
    <scope>IDENTIFICATION BY MASS SPECTROMETRY [LARGE SCALE ANALYSIS]</scope>
    <source>
        <strain>ATCC 25618 / H37Rv</strain>
    </source>
</reference>
<dbReference type="EMBL" id="AL123456">
    <property type="protein sequence ID" value="CCP45945.1"/>
    <property type="molecule type" value="Genomic_DNA"/>
</dbReference>
<dbReference type="PIR" id="H70645">
    <property type="entry name" value="H70645"/>
</dbReference>
<dbReference type="RefSeq" id="WP_003906988.1">
    <property type="nucleotide sequence ID" value="NZ_NVQJ01000019.1"/>
</dbReference>
<dbReference type="RefSeq" id="YP_177934.1">
    <property type="nucleotide sequence ID" value="NC_000962.3"/>
</dbReference>
<dbReference type="SMR" id="Q6MX07"/>
<dbReference type="STRING" id="83332.Rv3135"/>
<dbReference type="PaxDb" id="83332-Rv3135"/>
<dbReference type="DNASU" id="888153"/>
<dbReference type="GeneID" id="888153"/>
<dbReference type="KEGG" id="mtu:Rv3135"/>
<dbReference type="KEGG" id="mtv:RVBD_3135"/>
<dbReference type="TubercuList" id="Rv3135"/>
<dbReference type="eggNOG" id="COG5651">
    <property type="taxonomic scope" value="Bacteria"/>
</dbReference>
<dbReference type="InParanoid" id="Q6MX07"/>
<dbReference type="OrthoDB" id="4753752at2"/>
<dbReference type="PhylomeDB" id="Q6MX07"/>
<dbReference type="Proteomes" id="UP000001584">
    <property type="component" value="Chromosome"/>
</dbReference>
<dbReference type="Gene3D" id="1.20.1260.20">
    <property type="entry name" value="PPE superfamily"/>
    <property type="match status" value="1"/>
</dbReference>
<dbReference type="InterPro" id="IPR000030">
    <property type="entry name" value="PPE_dom"/>
</dbReference>
<dbReference type="InterPro" id="IPR038332">
    <property type="entry name" value="PPE_sf"/>
</dbReference>
<dbReference type="PANTHER" id="PTHR46766">
    <property type="entry name" value="GLUTAMINE-RICH PROTEIN 2"/>
    <property type="match status" value="1"/>
</dbReference>
<dbReference type="PANTHER" id="PTHR46766:SF1">
    <property type="entry name" value="GLUTAMINE-RICH PROTEIN 2"/>
    <property type="match status" value="1"/>
</dbReference>
<dbReference type="Pfam" id="PF00823">
    <property type="entry name" value="PPE"/>
    <property type="match status" value="1"/>
</dbReference>
<dbReference type="SUPFAM" id="SSF140459">
    <property type="entry name" value="PE/PPE dimer-like"/>
    <property type="match status" value="1"/>
</dbReference>
<gene>
    <name type="primary">PPE50</name>
    <name type="ordered locus">Rv3135</name>
</gene>
<name>PPE50_MYCTU</name>
<keyword id="KW-1185">Reference proteome</keyword>
<feature type="chain" id="PRO_0000378484" description="Uncharacterized PPE family protein PPE50">
    <location>
        <begin position="1"/>
        <end position="132"/>
    </location>
</feature>